<keyword id="KW-0030">Aminoacyl-tRNA synthetase</keyword>
<keyword id="KW-0067">ATP-binding</keyword>
<keyword id="KW-0436">Ligase</keyword>
<keyword id="KW-0496">Mitochondrion</keyword>
<keyword id="KW-0547">Nucleotide-binding</keyword>
<keyword id="KW-0648">Protein biosynthesis</keyword>
<keyword id="KW-1185">Reference proteome</keyword>
<keyword id="KW-0809">Transit peptide</keyword>
<proteinExistence type="inferred from homology"/>
<feature type="transit peptide" description="Mitochondrion" evidence="3">
    <location>
        <begin position="1"/>
        <end status="unknown"/>
    </location>
</feature>
<feature type="chain" id="PRO_0000327720" description="Tryptophan--tRNA ligase, mitochondrial">
    <location>
        <begin status="unknown"/>
        <end position="377"/>
    </location>
</feature>
<feature type="short sequence motif" description="'HIGH' region">
    <location>
        <begin position="22"/>
        <end position="31"/>
    </location>
</feature>
<feature type="short sequence motif" description="'KMSKS' region">
    <location>
        <begin position="242"/>
        <end position="246"/>
    </location>
</feature>
<feature type="binding site" evidence="2">
    <location>
        <position position="21"/>
    </location>
    <ligand>
        <name>ATP</name>
        <dbReference type="ChEBI" id="CHEBI:30616"/>
    </ligand>
</feature>
<feature type="binding site" evidence="2">
    <location>
        <begin position="28"/>
        <end position="31"/>
    </location>
    <ligand>
        <name>ATP</name>
        <dbReference type="ChEBI" id="CHEBI:30616"/>
    </ligand>
</feature>
<feature type="binding site" evidence="2">
    <location>
        <position position="181"/>
    </location>
    <ligand>
        <name>L-tryptophan</name>
        <dbReference type="ChEBI" id="CHEBI:57912"/>
    </ligand>
</feature>
<feature type="binding site" evidence="2">
    <location>
        <begin position="193"/>
        <end position="195"/>
    </location>
    <ligand>
        <name>ATP</name>
        <dbReference type="ChEBI" id="CHEBI:30616"/>
    </ligand>
</feature>
<feature type="binding site" evidence="2">
    <location>
        <begin position="242"/>
        <end position="246"/>
    </location>
    <ligand>
        <name>ATP</name>
        <dbReference type="ChEBI" id="CHEBI:30616"/>
    </ligand>
</feature>
<feature type="binding site" evidence="1">
    <location>
        <position position="245"/>
    </location>
    <ligand>
        <name>ATP</name>
        <dbReference type="ChEBI" id="CHEBI:30616"/>
    </ligand>
</feature>
<dbReference type="EC" id="6.1.1.2"/>
<dbReference type="EMBL" id="AAFI02000012">
    <property type="protein sequence ID" value="EAL70176.1"/>
    <property type="molecule type" value="Genomic_DNA"/>
</dbReference>
<dbReference type="RefSeq" id="XP_643957.1">
    <property type="nucleotide sequence ID" value="XM_638865.1"/>
</dbReference>
<dbReference type="SMR" id="Q86A90"/>
<dbReference type="FunCoup" id="Q86A90">
    <property type="interactions" value="376"/>
</dbReference>
<dbReference type="STRING" id="44689.Q86A90"/>
<dbReference type="PaxDb" id="44689-DDB0231246"/>
<dbReference type="EnsemblProtists" id="EAL70176">
    <property type="protein sequence ID" value="EAL70176"/>
    <property type="gene ID" value="DDB_G0274567"/>
</dbReference>
<dbReference type="GeneID" id="8619385"/>
<dbReference type="KEGG" id="ddi:DDB_G0274567"/>
<dbReference type="dictyBase" id="DDB_G0274567">
    <property type="gene designation" value="mtrpS"/>
</dbReference>
<dbReference type="VEuPathDB" id="AmoebaDB:DDB_G0274567"/>
<dbReference type="eggNOG" id="KOG2713">
    <property type="taxonomic scope" value="Eukaryota"/>
</dbReference>
<dbReference type="HOGENOM" id="CLU_029244_1_4_1"/>
<dbReference type="InParanoid" id="Q86A90"/>
<dbReference type="OMA" id="GWGQFKP"/>
<dbReference type="PhylomeDB" id="Q86A90"/>
<dbReference type="PRO" id="PR:Q86A90"/>
<dbReference type="Proteomes" id="UP000002195">
    <property type="component" value="Chromosome 2"/>
</dbReference>
<dbReference type="GO" id="GO:0005759">
    <property type="term" value="C:mitochondrial matrix"/>
    <property type="evidence" value="ECO:0007669"/>
    <property type="project" value="UniProtKB-SubCell"/>
</dbReference>
<dbReference type="GO" id="GO:0005739">
    <property type="term" value="C:mitochondrion"/>
    <property type="evidence" value="ECO:0000250"/>
    <property type="project" value="dictyBase"/>
</dbReference>
<dbReference type="GO" id="GO:0005524">
    <property type="term" value="F:ATP binding"/>
    <property type="evidence" value="ECO:0007669"/>
    <property type="project" value="UniProtKB-KW"/>
</dbReference>
<dbReference type="GO" id="GO:0004830">
    <property type="term" value="F:tryptophan-tRNA ligase activity"/>
    <property type="evidence" value="ECO:0000250"/>
    <property type="project" value="dictyBase"/>
</dbReference>
<dbReference type="GO" id="GO:0006436">
    <property type="term" value="P:tryptophanyl-tRNA aminoacylation"/>
    <property type="evidence" value="ECO:0000250"/>
    <property type="project" value="dictyBase"/>
</dbReference>
<dbReference type="CDD" id="cd00806">
    <property type="entry name" value="TrpRS_core"/>
    <property type="match status" value="1"/>
</dbReference>
<dbReference type="FunFam" id="1.10.240.10:FF:000002">
    <property type="entry name" value="Tryptophan--tRNA ligase"/>
    <property type="match status" value="1"/>
</dbReference>
<dbReference type="FunFam" id="3.40.50.620:FF:000597">
    <property type="entry name" value="Tryptophan--tRNA ligase, mitochondrial"/>
    <property type="match status" value="1"/>
</dbReference>
<dbReference type="Gene3D" id="3.40.50.620">
    <property type="entry name" value="HUPs"/>
    <property type="match status" value="1"/>
</dbReference>
<dbReference type="Gene3D" id="1.10.240.10">
    <property type="entry name" value="Tyrosyl-Transfer RNA Synthetase"/>
    <property type="match status" value="1"/>
</dbReference>
<dbReference type="HAMAP" id="MF_00140_B">
    <property type="entry name" value="Trp_tRNA_synth_B"/>
    <property type="match status" value="1"/>
</dbReference>
<dbReference type="InterPro" id="IPR002305">
    <property type="entry name" value="aa-tRNA-synth_Ic"/>
</dbReference>
<dbReference type="InterPro" id="IPR014729">
    <property type="entry name" value="Rossmann-like_a/b/a_fold"/>
</dbReference>
<dbReference type="InterPro" id="IPR002306">
    <property type="entry name" value="Trp-tRNA-ligase"/>
</dbReference>
<dbReference type="InterPro" id="IPR024109">
    <property type="entry name" value="Trp-tRNA-ligase_bac-type"/>
</dbReference>
<dbReference type="InterPro" id="IPR050203">
    <property type="entry name" value="Trp-tRNA_synthetase"/>
</dbReference>
<dbReference type="NCBIfam" id="TIGR00233">
    <property type="entry name" value="trpS"/>
    <property type="match status" value="1"/>
</dbReference>
<dbReference type="PANTHER" id="PTHR43766">
    <property type="entry name" value="TRYPTOPHAN--TRNA LIGASE, MITOCHONDRIAL"/>
    <property type="match status" value="1"/>
</dbReference>
<dbReference type="PANTHER" id="PTHR43766:SF1">
    <property type="entry name" value="TRYPTOPHAN--TRNA LIGASE, MITOCHONDRIAL"/>
    <property type="match status" value="1"/>
</dbReference>
<dbReference type="Pfam" id="PF00579">
    <property type="entry name" value="tRNA-synt_1b"/>
    <property type="match status" value="2"/>
</dbReference>
<dbReference type="PRINTS" id="PR01039">
    <property type="entry name" value="TRNASYNTHTRP"/>
</dbReference>
<dbReference type="SUPFAM" id="SSF52374">
    <property type="entry name" value="Nucleotidylyl transferase"/>
    <property type="match status" value="2"/>
</dbReference>
<reference key="1">
    <citation type="journal article" date="2002" name="Nature">
        <title>Sequence and analysis of chromosome 2 of Dictyostelium discoideum.</title>
        <authorList>
            <person name="Gloeckner G."/>
            <person name="Eichinger L."/>
            <person name="Szafranski K."/>
            <person name="Pachebat J.A."/>
            <person name="Bankier A.T."/>
            <person name="Dear P.H."/>
            <person name="Lehmann R."/>
            <person name="Baumgart C."/>
            <person name="Parra G."/>
            <person name="Abril J.F."/>
            <person name="Guigo R."/>
            <person name="Kumpf K."/>
            <person name="Tunggal B."/>
            <person name="Cox E.C."/>
            <person name="Quail M.A."/>
            <person name="Platzer M."/>
            <person name="Rosenthal A."/>
            <person name="Noegel A.A."/>
        </authorList>
    </citation>
    <scope>NUCLEOTIDE SEQUENCE [LARGE SCALE GENOMIC DNA]</scope>
    <source>
        <strain>AX4</strain>
    </source>
</reference>
<reference key="2">
    <citation type="journal article" date="2005" name="Nature">
        <title>The genome of the social amoeba Dictyostelium discoideum.</title>
        <authorList>
            <person name="Eichinger L."/>
            <person name="Pachebat J.A."/>
            <person name="Gloeckner G."/>
            <person name="Rajandream M.A."/>
            <person name="Sucgang R."/>
            <person name="Berriman M."/>
            <person name="Song J."/>
            <person name="Olsen R."/>
            <person name="Szafranski K."/>
            <person name="Xu Q."/>
            <person name="Tunggal B."/>
            <person name="Kummerfeld S."/>
            <person name="Madera M."/>
            <person name="Konfortov B.A."/>
            <person name="Rivero F."/>
            <person name="Bankier A.T."/>
            <person name="Lehmann R."/>
            <person name="Hamlin N."/>
            <person name="Davies R."/>
            <person name="Gaudet P."/>
            <person name="Fey P."/>
            <person name="Pilcher K."/>
            <person name="Chen G."/>
            <person name="Saunders D."/>
            <person name="Sodergren E.J."/>
            <person name="Davis P."/>
            <person name="Kerhornou A."/>
            <person name="Nie X."/>
            <person name="Hall N."/>
            <person name="Anjard C."/>
            <person name="Hemphill L."/>
            <person name="Bason N."/>
            <person name="Farbrother P."/>
            <person name="Desany B."/>
            <person name="Just E."/>
            <person name="Morio T."/>
            <person name="Rost R."/>
            <person name="Churcher C.M."/>
            <person name="Cooper J."/>
            <person name="Haydock S."/>
            <person name="van Driessche N."/>
            <person name="Cronin A."/>
            <person name="Goodhead I."/>
            <person name="Muzny D.M."/>
            <person name="Mourier T."/>
            <person name="Pain A."/>
            <person name="Lu M."/>
            <person name="Harper D."/>
            <person name="Lindsay R."/>
            <person name="Hauser H."/>
            <person name="James K.D."/>
            <person name="Quiles M."/>
            <person name="Madan Babu M."/>
            <person name="Saito T."/>
            <person name="Buchrieser C."/>
            <person name="Wardroper A."/>
            <person name="Felder M."/>
            <person name="Thangavelu M."/>
            <person name="Johnson D."/>
            <person name="Knights A."/>
            <person name="Loulseged H."/>
            <person name="Mungall K.L."/>
            <person name="Oliver K."/>
            <person name="Price C."/>
            <person name="Quail M.A."/>
            <person name="Urushihara H."/>
            <person name="Hernandez J."/>
            <person name="Rabbinowitsch E."/>
            <person name="Steffen D."/>
            <person name="Sanders M."/>
            <person name="Ma J."/>
            <person name="Kohara Y."/>
            <person name="Sharp S."/>
            <person name="Simmonds M.N."/>
            <person name="Spiegler S."/>
            <person name="Tivey A."/>
            <person name="Sugano S."/>
            <person name="White B."/>
            <person name="Walker D."/>
            <person name="Woodward J.R."/>
            <person name="Winckler T."/>
            <person name="Tanaka Y."/>
            <person name="Shaulsky G."/>
            <person name="Schleicher M."/>
            <person name="Weinstock G.M."/>
            <person name="Rosenthal A."/>
            <person name="Cox E.C."/>
            <person name="Chisholm R.L."/>
            <person name="Gibbs R.A."/>
            <person name="Loomis W.F."/>
            <person name="Platzer M."/>
            <person name="Kay R.R."/>
            <person name="Williams J.G."/>
            <person name="Dear P.H."/>
            <person name="Noegel A.A."/>
            <person name="Barrell B.G."/>
            <person name="Kuspa A."/>
        </authorList>
    </citation>
    <scope>NUCLEOTIDE SEQUENCE [LARGE SCALE GENOMIC DNA]</scope>
    <source>
        <strain>AX4</strain>
    </source>
</reference>
<protein>
    <recommendedName>
        <fullName>Tryptophan--tRNA ligase, mitochondrial</fullName>
        <ecNumber>6.1.1.2</ecNumber>
    </recommendedName>
    <alternativeName>
        <fullName>Tryptophanyl-tRNA synthetase</fullName>
        <shortName>TrpRS</shortName>
    </alternativeName>
</protein>
<gene>
    <name type="primary">wars2</name>
    <name type="synonym">mtrpS</name>
    <name type="ORF">DDB_G0274567</name>
</gene>
<evidence type="ECO:0000250" key="1"/>
<evidence type="ECO:0000250" key="2">
    <source>
        <dbReference type="UniProtKB" id="Q9UGM6"/>
    </source>
</evidence>
<evidence type="ECO:0000255" key="3"/>
<evidence type="ECO:0000305" key="4"/>
<organism>
    <name type="scientific">Dictyostelium discoideum</name>
    <name type="common">Social amoeba</name>
    <dbReference type="NCBI Taxonomy" id="44689"/>
    <lineage>
        <taxon>Eukaryota</taxon>
        <taxon>Amoebozoa</taxon>
        <taxon>Evosea</taxon>
        <taxon>Eumycetozoa</taxon>
        <taxon>Dictyostelia</taxon>
        <taxon>Dictyosteliales</taxon>
        <taxon>Dictyosteliaceae</taxon>
        <taxon>Dictyostelium</taxon>
    </lineage>
</organism>
<sequence length="377" mass="42215">MKIDEVNFKDKTKVTVFSGMQPTSSALHLGNYLGAMGNWLKIQDLVTKNNKEEEELLNLSESSSSSSSSQSTKINEKHKLIFSIVDLHSLTSTKSLSPKELQSNTISVAINYLACGIDPEKVILFNQSMVPAHSELTWILNCITSFSKLSNMIQFKEKTKSSNEASVSNGLLSYPVLMAADILLYKATHVPVGEDQTQHLEFTRDIAQAFHSNFKSKFFPYPSIITSEQSKRIMSLQDGRLKMSKSDPLEISRISLTDTDDQIKLKIKKSKTDTIIGITYDPINRPDISNLLSIASETSGIPITDLQSEFKDKSNAIFKEFLSNSIIKNISPIREKINYYQSNPKLVRDILLQGSEKANKIANKNLNIIKDIVGLYH</sequence>
<comment type="catalytic activity">
    <reaction>
        <text>tRNA(Trp) + L-tryptophan + ATP = L-tryptophyl-tRNA(Trp) + AMP + diphosphate + H(+)</text>
        <dbReference type="Rhea" id="RHEA:24080"/>
        <dbReference type="Rhea" id="RHEA-COMP:9671"/>
        <dbReference type="Rhea" id="RHEA-COMP:9705"/>
        <dbReference type="ChEBI" id="CHEBI:15378"/>
        <dbReference type="ChEBI" id="CHEBI:30616"/>
        <dbReference type="ChEBI" id="CHEBI:33019"/>
        <dbReference type="ChEBI" id="CHEBI:57912"/>
        <dbReference type="ChEBI" id="CHEBI:78442"/>
        <dbReference type="ChEBI" id="CHEBI:78535"/>
        <dbReference type="ChEBI" id="CHEBI:456215"/>
        <dbReference type="EC" id="6.1.1.2"/>
    </reaction>
</comment>
<comment type="subcellular location">
    <subcellularLocation>
        <location evidence="1">Mitochondrion matrix</location>
    </subcellularLocation>
</comment>
<comment type="similarity">
    <text evidence="4">Belongs to the class-I aminoacyl-tRNA synthetase family.</text>
</comment>
<accession>Q86A90</accession>
<accession>Q555V3</accession>
<name>SYWM_DICDI</name>